<name>RL9_SALPC</name>
<sequence length="149" mass="15784">MQVILLDKVANLGSLGDQVNVKAGYARNFLVPQGKAVPATKKNVEYFEARRAELEAKLADVLAAANARAEKINALETVTIASKAGDEGKLFGSIGTRDIADAVTAAGVDVAKSEVRLPNGVLRTTGEHEVNFQVHSEVFAKVIINVVAE</sequence>
<evidence type="ECO:0000255" key="1">
    <source>
        <dbReference type="HAMAP-Rule" id="MF_00503"/>
    </source>
</evidence>
<evidence type="ECO:0000305" key="2"/>
<accession>C0Q6G1</accession>
<gene>
    <name evidence="1" type="primary">rplI</name>
    <name type="ordered locus">SPC_4541</name>
</gene>
<reference key="1">
    <citation type="journal article" date="2009" name="PLoS ONE">
        <title>Salmonella paratyphi C: genetic divergence from Salmonella choleraesuis and pathogenic convergence with Salmonella typhi.</title>
        <authorList>
            <person name="Liu W.-Q."/>
            <person name="Feng Y."/>
            <person name="Wang Y."/>
            <person name="Zou Q.-H."/>
            <person name="Chen F."/>
            <person name="Guo J.-T."/>
            <person name="Peng Y.-H."/>
            <person name="Jin Y."/>
            <person name="Li Y.-G."/>
            <person name="Hu S.-N."/>
            <person name="Johnston R.N."/>
            <person name="Liu G.-R."/>
            <person name="Liu S.-L."/>
        </authorList>
    </citation>
    <scope>NUCLEOTIDE SEQUENCE [LARGE SCALE GENOMIC DNA]</scope>
    <source>
        <strain>RKS4594</strain>
    </source>
</reference>
<dbReference type="EMBL" id="CP000857">
    <property type="protein sequence ID" value="ACN48591.1"/>
    <property type="molecule type" value="Genomic_DNA"/>
</dbReference>
<dbReference type="RefSeq" id="WP_001196065.1">
    <property type="nucleotide sequence ID" value="NC_012125.1"/>
</dbReference>
<dbReference type="SMR" id="C0Q6G1"/>
<dbReference type="GeneID" id="66758618"/>
<dbReference type="KEGG" id="sei:SPC_4541"/>
<dbReference type="HOGENOM" id="CLU_078938_4_1_6"/>
<dbReference type="Proteomes" id="UP000001599">
    <property type="component" value="Chromosome"/>
</dbReference>
<dbReference type="GO" id="GO:1990904">
    <property type="term" value="C:ribonucleoprotein complex"/>
    <property type="evidence" value="ECO:0007669"/>
    <property type="project" value="UniProtKB-KW"/>
</dbReference>
<dbReference type="GO" id="GO:0005840">
    <property type="term" value="C:ribosome"/>
    <property type="evidence" value="ECO:0007669"/>
    <property type="project" value="UniProtKB-KW"/>
</dbReference>
<dbReference type="GO" id="GO:0019843">
    <property type="term" value="F:rRNA binding"/>
    <property type="evidence" value="ECO:0007669"/>
    <property type="project" value="UniProtKB-UniRule"/>
</dbReference>
<dbReference type="GO" id="GO:0003735">
    <property type="term" value="F:structural constituent of ribosome"/>
    <property type="evidence" value="ECO:0007669"/>
    <property type="project" value="InterPro"/>
</dbReference>
<dbReference type="GO" id="GO:0006412">
    <property type="term" value="P:translation"/>
    <property type="evidence" value="ECO:0007669"/>
    <property type="project" value="UniProtKB-UniRule"/>
</dbReference>
<dbReference type="FunFam" id="3.10.430.100:FF:000001">
    <property type="entry name" value="50S ribosomal protein L9"/>
    <property type="match status" value="1"/>
</dbReference>
<dbReference type="FunFam" id="3.40.5.10:FF:000001">
    <property type="entry name" value="50S ribosomal protein L9"/>
    <property type="match status" value="1"/>
</dbReference>
<dbReference type="Gene3D" id="3.10.430.100">
    <property type="entry name" value="Ribosomal protein L9, C-terminal domain"/>
    <property type="match status" value="1"/>
</dbReference>
<dbReference type="Gene3D" id="3.40.5.10">
    <property type="entry name" value="Ribosomal protein L9, N-terminal domain"/>
    <property type="match status" value="1"/>
</dbReference>
<dbReference type="HAMAP" id="MF_00503">
    <property type="entry name" value="Ribosomal_bL9"/>
    <property type="match status" value="1"/>
</dbReference>
<dbReference type="InterPro" id="IPR000244">
    <property type="entry name" value="Ribosomal_bL9"/>
</dbReference>
<dbReference type="InterPro" id="IPR009027">
    <property type="entry name" value="Ribosomal_bL9/RNase_H1_N"/>
</dbReference>
<dbReference type="InterPro" id="IPR020594">
    <property type="entry name" value="Ribosomal_bL9_bac/chp"/>
</dbReference>
<dbReference type="InterPro" id="IPR020069">
    <property type="entry name" value="Ribosomal_bL9_C"/>
</dbReference>
<dbReference type="InterPro" id="IPR036791">
    <property type="entry name" value="Ribosomal_bL9_C_sf"/>
</dbReference>
<dbReference type="InterPro" id="IPR020070">
    <property type="entry name" value="Ribosomal_bL9_N"/>
</dbReference>
<dbReference type="InterPro" id="IPR036935">
    <property type="entry name" value="Ribosomal_bL9_N_sf"/>
</dbReference>
<dbReference type="NCBIfam" id="TIGR00158">
    <property type="entry name" value="L9"/>
    <property type="match status" value="1"/>
</dbReference>
<dbReference type="PANTHER" id="PTHR21368">
    <property type="entry name" value="50S RIBOSOMAL PROTEIN L9"/>
    <property type="match status" value="1"/>
</dbReference>
<dbReference type="Pfam" id="PF03948">
    <property type="entry name" value="Ribosomal_L9_C"/>
    <property type="match status" value="1"/>
</dbReference>
<dbReference type="Pfam" id="PF01281">
    <property type="entry name" value="Ribosomal_L9_N"/>
    <property type="match status" value="1"/>
</dbReference>
<dbReference type="SUPFAM" id="SSF55658">
    <property type="entry name" value="L9 N-domain-like"/>
    <property type="match status" value="1"/>
</dbReference>
<dbReference type="SUPFAM" id="SSF55653">
    <property type="entry name" value="Ribosomal protein L9 C-domain"/>
    <property type="match status" value="1"/>
</dbReference>
<dbReference type="PROSITE" id="PS00651">
    <property type="entry name" value="RIBOSOMAL_L9"/>
    <property type="match status" value="1"/>
</dbReference>
<organism>
    <name type="scientific">Salmonella paratyphi C (strain RKS4594)</name>
    <dbReference type="NCBI Taxonomy" id="476213"/>
    <lineage>
        <taxon>Bacteria</taxon>
        <taxon>Pseudomonadati</taxon>
        <taxon>Pseudomonadota</taxon>
        <taxon>Gammaproteobacteria</taxon>
        <taxon>Enterobacterales</taxon>
        <taxon>Enterobacteriaceae</taxon>
        <taxon>Salmonella</taxon>
    </lineage>
</organism>
<keyword id="KW-0687">Ribonucleoprotein</keyword>
<keyword id="KW-0689">Ribosomal protein</keyword>
<keyword id="KW-0694">RNA-binding</keyword>
<keyword id="KW-0699">rRNA-binding</keyword>
<protein>
    <recommendedName>
        <fullName evidence="1">Large ribosomal subunit protein bL9</fullName>
    </recommendedName>
    <alternativeName>
        <fullName evidence="2">50S ribosomal protein L9</fullName>
    </alternativeName>
</protein>
<comment type="function">
    <text evidence="1">Binds to the 23S rRNA.</text>
</comment>
<comment type="similarity">
    <text evidence="1">Belongs to the bacterial ribosomal protein bL9 family.</text>
</comment>
<feature type="chain" id="PRO_1000196262" description="Large ribosomal subunit protein bL9">
    <location>
        <begin position="1"/>
        <end position="149"/>
    </location>
</feature>
<proteinExistence type="inferred from homology"/>